<sequence>MNSEQLTEILKAAFPDAEVAVSGQAGKFDLRIVDNQFEGKRPVPRQQAVYAPLNSYIASGEVHAVTIRAMTKEEWRKASMFGA</sequence>
<feature type="chain" id="PRO_0000201223" description="Uncharacterized protein in rpoN-murA intergenic region">
    <location>
        <begin position="1"/>
        <end position="83"/>
    </location>
</feature>
<dbReference type="EMBL" id="L26051">
    <property type="protein sequence ID" value="AAA21617.1"/>
    <property type="molecule type" value="Genomic_DNA"/>
</dbReference>
<dbReference type="RefSeq" id="WP_004723729.1">
    <property type="nucleotide sequence ID" value="NZ_VZOG01000042.1"/>
</dbReference>
<dbReference type="SMR" id="P33989"/>
<dbReference type="STRING" id="106649.GCA_000829655_01552"/>
<dbReference type="GeneID" id="67745590"/>
<dbReference type="Gene3D" id="3.30.300.90">
    <property type="entry name" value="BolA-like"/>
    <property type="match status" value="1"/>
</dbReference>
<dbReference type="InterPro" id="IPR002634">
    <property type="entry name" value="BolA"/>
</dbReference>
<dbReference type="InterPro" id="IPR036065">
    <property type="entry name" value="BolA-like_sf"/>
</dbReference>
<dbReference type="InterPro" id="IPR050961">
    <property type="entry name" value="BolA/IbaG_stress_morph_reg"/>
</dbReference>
<dbReference type="PANTHER" id="PTHR46229:SF4">
    <property type="entry name" value="ACID STRESS PROTEIN IBAG"/>
    <property type="match status" value="1"/>
</dbReference>
<dbReference type="PANTHER" id="PTHR46229">
    <property type="entry name" value="BOLA TRANSCRIPTION REGULATOR"/>
    <property type="match status" value="1"/>
</dbReference>
<dbReference type="Pfam" id="PF01722">
    <property type="entry name" value="BolA"/>
    <property type="match status" value="1"/>
</dbReference>
<dbReference type="PIRSF" id="PIRSF003113">
    <property type="entry name" value="BolA"/>
    <property type="match status" value="1"/>
</dbReference>
<dbReference type="SUPFAM" id="SSF82657">
    <property type="entry name" value="BolA-like"/>
    <property type="match status" value="1"/>
</dbReference>
<accession>P33989</accession>
<evidence type="ECO:0000305" key="1"/>
<reference key="1">
    <citation type="journal article" date="1994" name="J. Bacteriol.">
        <title>RpoN (sigma 54) is required for conversion of phenol to catechol in Acinetobacter calcoaceticus.</title>
        <authorList>
            <person name="Ehrt S."/>
            <person name="Ornston L.N."/>
            <person name="Hillen W."/>
        </authorList>
    </citation>
    <scope>NUCLEOTIDE SEQUENCE [GENOMIC DNA]</scope>
    <source>
        <strain>ATCC 11171 / DSM 590 / CCUG 2491 / LMG 988 / NCIMB 8250 / CIP 63.46 / B94</strain>
    </source>
</reference>
<protein>
    <recommendedName>
        <fullName>Uncharacterized protein in rpoN-murA intergenic region</fullName>
    </recommendedName>
    <alternativeName>
        <fullName>ORF3</fullName>
    </alternativeName>
</protein>
<comment type="similarity">
    <text evidence="1">Belongs to the BolA/IbaG family.</text>
</comment>
<organism>
    <name type="scientific">Acinetobacter guillouiae</name>
    <name type="common">Acinetobacter genomosp. 11</name>
    <dbReference type="NCBI Taxonomy" id="106649"/>
    <lineage>
        <taxon>Bacteria</taxon>
        <taxon>Pseudomonadati</taxon>
        <taxon>Pseudomonadota</taxon>
        <taxon>Gammaproteobacteria</taxon>
        <taxon>Moraxellales</taxon>
        <taxon>Moraxellaceae</taxon>
        <taxon>Acinetobacter</taxon>
    </lineage>
</organism>
<proteinExistence type="inferred from homology"/>
<name>YRPM_ACIGI</name>